<reference key="1">
    <citation type="journal article" date="2004" name="Proc. Natl. Acad. Sci. U.S.A.">
        <title>Genome sequence of the enterobacterial phytopathogen Erwinia carotovora subsp. atroseptica and characterization of virulence factors.</title>
        <authorList>
            <person name="Bell K.S."/>
            <person name="Sebaihia M."/>
            <person name="Pritchard L."/>
            <person name="Holden M.T.G."/>
            <person name="Hyman L.J."/>
            <person name="Holeva M.C."/>
            <person name="Thomson N.R."/>
            <person name="Bentley S.D."/>
            <person name="Churcher L.J.C."/>
            <person name="Mungall K."/>
            <person name="Atkin R."/>
            <person name="Bason N."/>
            <person name="Brooks K."/>
            <person name="Chillingworth T."/>
            <person name="Clark K."/>
            <person name="Doggett J."/>
            <person name="Fraser A."/>
            <person name="Hance Z."/>
            <person name="Hauser H."/>
            <person name="Jagels K."/>
            <person name="Moule S."/>
            <person name="Norbertczak H."/>
            <person name="Ormond D."/>
            <person name="Price C."/>
            <person name="Quail M.A."/>
            <person name="Sanders M."/>
            <person name="Walker D."/>
            <person name="Whitehead S."/>
            <person name="Salmond G.P.C."/>
            <person name="Birch P.R.J."/>
            <person name="Parkhill J."/>
            <person name="Toth I.K."/>
        </authorList>
    </citation>
    <scope>NUCLEOTIDE SEQUENCE [LARGE SCALE GENOMIC DNA]</scope>
    <source>
        <strain>SCRI 1043 / ATCC BAA-672</strain>
    </source>
</reference>
<dbReference type="EC" id="2.6.1.87" evidence="1"/>
<dbReference type="EMBL" id="BX950851">
    <property type="protein sequence ID" value="CAG76045.1"/>
    <property type="molecule type" value="Genomic_DNA"/>
</dbReference>
<dbReference type="RefSeq" id="WP_011094669.1">
    <property type="nucleotide sequence ID" value="NC_004547.2"/>
</dbReference>
<dbReference type="SMR" id="Q6D2E9"/>
<dbReference type="STRING" id="218491.ECA3146"/>
<dbReference type="KEGG" id="eca:ECA3146"/>
<dbReference type="PATRIC" id="fig|218491.5.peg.3183"/>
<dbReference type="eggNOG" id="COG0399">
    <property type="taxonomic scope" value="Bacteria"/>
</dbReference>
<dbReference type="HOGENOM" id="CLU_033332_0_3_6"/>
<dbReference type="OrthoDB" id="9804264at2"/>
<dbReference type="UniPathway" id="UPA00030"/>
<dbReference type="UniPathway" id="UPA00032">
    <property type="reaction ID" value="UER00493"/>
</dbReference>
<dbReference type="Proteomes" id="UP000007966">
    <property type="component" value="Chromosome"/>
</dbReference>
<dbReference type="GO" id="GO:0016020">
    <property type="term" value="C:membrane"/>
    <property type="evidence" value="ECO:0007669"/>
    <property type="project" value="GOC"/>
</dbReference>
<dbReference type="GO" id="GO:0030170">
    <property type="term" value="F:pyridoxal phosphate binding"/>
    <property type="evidence" value="ECO:0007669"/>
    <property type="project" value="TreeGrafter"/>
</dbReference>
<dbReference type="GO" id="GO:0099620">
    <property type="term" value="F:UDP-4-amino-4-deoxy-L-arabinose aminotransferase"/>
    <property type="evidence" value="ECO:0007669"/>
    <property type="project" value="UniProtKB-EC"/>
</dbReference>
<dbReference type="GO" id="GO:0009245">
    <property type="term" value="P:lipid A biosynthetic process"/>
    <property type="evidence" value="ECO:0007669"/>
    <property type="project" value="UniProtKB-KW"/>
</dbReference>
<dbReference type="GO" id="GO:0009103">
    <property type="term" value="P:lipopolysaccharide biosynthetic process"/>
    <property type="evidence" value="ECO:0007669"/>
    <property type="project" value="UniProtKB-UniRule"/>
</dbReference>
<dbReference type="GO" id="GO:0046677">
    <property type="term" value="P:response to antibiotic"/>
    <property type="evidence" value="ECO:0007669"/>
    <property type="project" value="UniProtKB-KW"/>
</dbReference>
<dbReference type="CDD" id="cd00616">
    <property type="entry name" value="AHBA_syn"/>
    <property type="match status" value="1"/>
</dbReference>
<dbReference type="FunFam" id="3.40.640.10:FF:000040">
    <property type="entry name" value="UDP-4-amino-4-deoxy-L-arabinose--oxoglutarate aminotransferase"/>
    <property type="match status" value="1"/>
</dbReference>
<dbReference type="FunFam" id="3.90.1150.10:FF:000030">
    <property type="entry name" value="UDP-4-amino-4-deoxy-L-arabinose--oxoglutarate aminotransferase"/>
    <property type="match status" value="1"/>
</dbReference>
<dbReference type="Gene3D" id="3.90.1150.10">
    <property type="entry name" value="Aspartate Aminotransferase, domain 1"/>
    <property type="match status" value="1"/>
</dbReference>
<dbReference type="Gene3D" id="3.40.640.10">
    <property type="entry name" value="Type I PLP-dependent aspartate aminotransferase-like (Major domain)"/>
    <property type="match status" value="1"/>
</dbReference>
<dbReference type="HAMAP" id="MF_01167">
    <property type="entry name" value="ArnB_transfer"/>
    <property type="match status" value="1"/>
</dbReference>
<dbReference type="InterPro" id="IPR022850">
    <property type="entry name" value="ArnB_NH2Trfase"/>
</dbReference>
<dbReference type="InterPro" id="IPR000653">
    <property type="entry name" value="DegT/StrS_aminotransferase"/>
</dbReference>
<dbReference type="InterPro" id="IPR015424">
    <property type="entry name" value="PyrdxlP-dep_Trfase"/>
</dbReference>
<dbReference type="InterPro" id="IPR015421">
    <property type="entry name" value="PyrdxlP-dep_Trfase_major"/>
</dbReference>
<dbReference type="InterPro" id="IPR015422">
    <property type="entry name" value="PyrdxlP-dep_Trfase_small"/>
</dbReference>
<dbReference type="NCBIfam" id="NF008658">
    <property type="entry name" value="PRK11658.1"/>
    <property type="match status" value="1"/>
</dbReference>
<dbReference type="PANTHER" id="PTHR30244">
    <property type="entry name" value="TRANSAMINASE"/>
    <property type="match status" value="1"/>
</dbReference>
<dbReference type="PANTHER" id="PTHR30244:SF41">
    <property type="entry name" value="UDP-4-AMINO-4-DEOXY-L-ARABINOSE--OXOGLUTARATE AMINOTRANSFERASE"/>
    <property type="match status" value="1"/>
</dbReference>
<dbReference type="Pfam" id="PF01041">
    <property type="entry name" value="DegT_DnrJ_EryC1"/>
    <property type="match status" value="1"/>
</dbReference>
<dbReference type="PIRSF" id="PIRSF000390">
    <property type="entry name" value="PLP_StrS"/>
    <property type="match status" value="1"/>
</dbReference>
<dbReference type="SUPFAM" id="SSF53383">
    <property type="entry name" value="PLP-dependent transferases"/>
    <property type="match status" value="1"/>
</dbReference>
<comment type="function">
    <text evidence="1">Catalyzes the conversion of UDP-4-keto-arabinose (UDP-Ara4O) to UDP-4-amino-4-deoxy-L-arabinose (UDP-L-Ara4N). The modified arabinose is attached to lipid A and is required for resistance to polymyxin and cationic antimicrobial peptides.</text>
</comment>
<comment type="catalytic activity">
    <reaction evidence="1">
        <text>UDP-4-amino-4-deoxy-beta-L-arabinose + 2-oxoglutarate = UDP-beta-L-threo-pentopyranos-4-ulose + L-glutamate</text>
        <dbReference type="Rhea" id="RHEA:24710"/>
        <dbReference type="ChEBI" id="CHEBI:16810"/>
        <dbReference type="ChEBI" id="CHEBI:29985"/>
        <dbReference type="ChEBI" id="CHEBI:58708"/>
        <dbReference type="ChEBI" id="CHEBI:58710"/>
        <dbReference type="EC" id="2.6.1.87"/>
    </reaction>
</comment>
<comment type="cofactor">
    <cofactor evidence="1">
        <name>pyridoxal 5'-phosphate</name>
        <dbReference type="ChEBI" id="CHEBI:597326"/>
    </cofactor>
</comment>
<comment type="pathway">
    <text evidence="1">Nucleotide-sugar biosynthesis; UDP-4-deoxy-4-formamido-beta-L-arabinose biosynthesis; UDP-4-deoxy-4-formamido-beta-L-arabinose from UDP-alpha-D-glucuronate: step 2/3.</text>
</comment>
<comment type="pathway">
    <text evidence="1">Bacterial outer membrane biogenesis; lipopolysaccharide biosynthesis.</text>
</comment>
<comment type="subunit">
    <text evidence="1">Homodimer.</text>
</comment>
<comment type="similarity">
    <text evidence="1">Belongs to the DegT/DnrJ/EryC1 family. ArnB subfamily.</text>
</comment>
<keyword id="KW-0032">Aminotransferase</keyword>
<keyword id="KW-0046">Antibiotic resistance</keyword>
<keyword id="KW-0441">Lipid A biosynthesis</keyword>
<keyword id="KW-0444">Lipid biosynthesis</keyword>
<keyword id="KW-0443">Lipid metabolism</keyword>
<keyword id="KW-0448">Lipopolysaccharide biosynthesis</keyword>
<keyword id="KW-0663">Pyridoxal phosphate</keyword>
<keyword id="KW-1185">Reference proteome</keyword>
<keyword id="KW-0808">Transferase</keyword>
<gene>
    <name evidence="1" type="primary">arnB</name>
    <name type="ordered locus">ECA3146</name>
</gene>
<evidence type="ECO:0000255" key="1">
    <source>
        <dbReference type="HAMAP-Rule" id="MF_01167"/>
    </source>
</evidence>
<protein>
    <recommendedName>
        <fullName evidence="1">UDP-4-amino-4-deoxy-L-arabinose--oxoglutarate aminotransferase</fullName>
        <ecNumber evidence="1">2.6.1.87</ecNumber>
    </recommendedName>
    <alternativeName>
        <fullName evidence="1">UDP-(beta-L-threo-pentapyranosyl-4''-ulose diphosphate) aminotransferase</fullName>
        <shortName evidence="1">UDP-Ara4O aminotransferase</shortName>
    </alternativeName>
    <alternativeName>
        <fullName evidence="1">UDP-4-amino-4-deoxy-L-arabinose aminotransferase</fullName>
    </alternativeName>
</protein>
<name>ARNB_PECAS</name>
<accession>Q6D2E9</accession>
<feature type="chain" id="PRO_0000110017" description="UDP-4-amino-4-deoxy-L-arabinose--oxoglutarate aminotransferase">
    <location>
        <begin position="1"/>
        <end position="382"/>
    </location>
</feature>
<feature type="modified residue" description="N6-(pyridoxal phosphate)lysine" evidence="1">
    <location>
        <position position="182"/>
    </location>
</feature>
<organism>
    <name type="scientific">Pectobacterium atrosepticum (strain SCRI 1043 / ATCC BAA-672)</name>
    <name type="common">Erwinia carotovora subsp. atroseptica</name>
    <dbReference type="NCBI Taxonomy" id="218491"/>
    <lineage>
        <taxon>Bacteria</taxon>
        <taxon>Pseudomonadati</taxon>
        <taxon>Pseudomonadota</taxon>
        <taxon>Gammaproteobacteria</taxon>
        <taxon>Enterobacterales</taxon>
        <taxon>Pectobacteriaceae</taxon>
        <taxon>Pectobacterium</taxon>
    </lineage>
</organism>
<sequence length="382" mass="41960">MTDFLPFSRPTMGDEEIAAVAEVLRSGWITTGPKCQQLEQAFCQQFGCQQAIAVSSATGGMHVTLMALGIGPGDEVITPSQTWVSTVNIITLLGAEPVMVDVDRHTLMVRSQDIEAAITPKTKAIIPVHYAGAPADLDALRALSERYGIPLIEDAAHAVGTQYRGEWIGARGTAIFSFHAIKNITCAEGGMVVTDDEALAERIRSLKFHGLGVDAFDRQLQGRKPQAEVVTPGFKYNLADINAAIALVQLDKLPAINARRQQLAARYLTQLHSLPLQPLAVPDYPHLHAWHLFMVRVDETQCGISRDDLMAALQTHGIGTGLHFRAVHTQKYYRERYPHLHLPETEWNSASLMTLPLFPDMQDSDVDRVVAALTSILESVRD</sequence>
<proteinExistence type="inferred from homology"/>